<dbReference type="EC" id="3.6.4.13"/>
<dbReference type="EMBL" id="AC027035">
    <property type="protein sequence ID" value="AAG51287.1"/>
    <property type="status" value="ALT_SEQ"/>
    <property type="molecule type" value="Genomic_DNA"/>
</dbReference>
<dbReference type="EMBL" id="AC051630">
    <property type="protein sequence ID" value="AAG51220.1"/>
    <property type="molecule type" value="Genomic_DNA"/>
</dbReference>
<dbReference type="EMBL" id="CP002684">
    <property type="protein sequence ID" value="AEE31588.1"/>
    <property type="molecule type" value="Genomic_DNA"/>
</dbReference>
<dbReference type="EMBL" id="CP002684">
    <property type="protein sequence ID" value="ANM58243.1"/>
    <property type="molecule type" value="Genomic_DNA"/>
</dbReference>
<dbReference type="EMBL" id="AK227299">
    <property type="protein sequence ID" value="BAE99315.1"/>
    <property type="molecule type" value="mRNA"/>
</dbReference>
<dbReference type="PIR" id="E86457">
    <property type="entry name" value="E86457"/>
</dbReference>
<dbReference type="RefSeq" id="NP_001320693.1">
    <property type="nucleotide sequence ID" value="NM_001333039.1"/>
</dbReference>
<dbReference type="RefSeq" id="NP_174605.1">
    <property type="nucleotide sequence ID" value="NM_103064.4"/>
</dbReference>
<dbReference type="SMR" id="Q9C813"/>
<dbReference type="FunCoup" id="Q9C813">
    <property type="interactions" value="4489"/>
</dbReference>
<dbReference type="STRING" id="3702.Q9C813"/>
<dbReference type="GlyGen" id="Q9C813">
    <property type="glycosylation" value="1 site"/>
</dbReference>
<dbReference type="PaxDb" id="3702-AT1G33390.1"/>
<dbReference type="ProteomicsDB" id="224074"/>
<dbReference type="EnsemblPlants" id="AT1G33390.1">
    <property type="protein sequence ID" value="AT1G33390.1"/>
    <property type="gene ID" value="AT1G33390"/>
</dbReference>
<dbReference type="EnsemblPlants" id="AT1G33390.2">
    <property type="protein sequence ID" value="AT1G33390.2"/>
    <property type="gene ID" value="AT1G33390"/>
</dbReference>
<dbReference type="GeneID" id="840232"/>
<dbReference type="Gramene" id="AT1G33390.1">
    <property type="protein sequence ID" value="AT1G33390.1"/>
    <property type="gene ID" value="AT1G33390"/>
</dbReference>
<dbReference type="Gramene" id="AT1G33390.2">
    <property type="protein sequence ID" value="AT1G33390.2"/>
    <property type="gene ID" value="AT1G33390"/>
</dbReference>
<dbReference type="KEGG" id="ath:AT1G33390"/>
<dbReference type="Araport" id="AT1G33390"/>
<dbReference type="TAIR" id="AT1G33390">
    <property type="gene designation" value="FAS4"/>
</dbReference>
<dbReference type="eggNOG" id="KOG0926">
    <property type="taxonomic scope" value="Eukaryota"/>
</dbReference>
<dbReference type="HOGENOM" id="CLU_001832_0_0_1"/>
<dbReference type="InParanoid" id="Q9C813"/>
<dbReference type="OMA" id="KYAYHCA"/>
<dbReference type="PhylomeDB" id="Q9C813"/>
<dbReference type="PRO" id="PR:Q9C813"/>
<dbReference type="Proteomes" id="UP000006548">
    <property type="component" value="Chromosome 1"/>
</dbReference>
<dbReference type="ExpressionAtlas" id="Q9C813">
    <property type="expression patterns" value="baseline and differential"/>
</dbReference>
<dbReference type="GO" id="GO:0005524">
    <property type="term" value="F:ATP binding"/>
    <property type="evidence" value="ECO:0007669"/>
    <property type="project" value="UniProtKB-KW"/>
</dbReference>
<dbReference type="GO" id="GO:0016887">
    <property type="term" value="F:ATP hydrolysis activity"/>
    <property type="evidence" value="ECO:0007669"/>
    <property type="project" value="RHEA"/>
</dbReference>
<dbReference type="GO" id="GO:0003676">
    <property type="term" value="F:nucleic acid binding"/>
    <property type="evidence" value="ECO:0007669"/>
    <property type="project" value="InterPro"/>
</dbReference>
<dbReference type="GO" id="GO:0003724">
    <property type="term" value="F:RNA helicase activity"/>
    <property type="evidence" value="ECO:0007669"/>
    <property type="project" value="UniProtKB-EC"/>
</dbReference>
<dbReference type="CDD" id="cd17982">
    <property type="entry name" value="DEXHc_DHX37"/>
    <property type="match status" value="1"/>
</dbReference>
<dbReference type="CDD" id="cd18791">
    <property type="entry name" value="SF2_C_RHA"/>
    <property type="match status" value="1"/>
</dbReference>
<dbReference type="FunFam" id="1.20.120.1080:FF:000021">
    <property type="entry name" value="ATP-dependent RNA helicase DEAH13"/>
    <property type="match status" value="1"/>
</dbReference>
<dbReference type="FunFam" id="3.40.50.300:FF:001427">
    <property type="entry name" value="ATP-dependent RNA helicase DEAH13"/>
    <property type="match status" value="1"/>
</dbReference>
<dbReference type="FunFam" id="3.40.50.300:FF:001764">
    <property type="entry name" value="ATP-dependent RNA helicase DEAH13"/>
    <property type="match status" value="1"/>
</dbReference>
<dbReference type="FunFam" id="3.40.50.300:FF:000637">
    <property type="entry name" value="ATP-dependent RNA helicase DHX37/DHR1"/>
    <property type="match status" value="1"/>
</dbReference>
<dbReference type="Gene3D" id="1.20.120.1080">
    <property type="match status" value="1"/>
</dbReference>
<dbReference type="Gene3D" id="3.40.50.300">
    <property type="entry name" value="P-loop containing nucleotide triphosphate hydrolases"/>
    <property type="match status" value="3"/>
</dbReference>
<dbReference type="InterPro" id="IPR011709">
    <property type="entry name" value="DEAD-box_helicase_OB_fold"/>
</dbReference>
<dbReference type="InterPro" id="IPR011545">
    <property type="entry name" value="DEAD/DEAH_box_helicase_dom"/>
</dbReference>
<dbReference type="InterPro" id="IPR056371">
    <property type="entry name" value="DHX37-like_C"/>
</dbReference>
<dbReference type="InterPro" id="IPR002464">
    <property type="entry name" value="DNA/RNA_helicase_DEAH_CS"/>
</dbReference>
<dbReference type="InterPro" id="IPR048333">
    <property type="entry name" value="HA2_WH"/>
</dbReference>
<dbReference type="InterPro" id="IPR007502">
    <property type="entry name" value="Helicase-assoc_dom"/>
</dbReference>
<dbReference type="InterPro" id="IPR014001">
    <property type="entry name" value="Helicase_ATP-bd"/>
</dbReference>
<dbReference type="InterPro" id="IPR001650">
    <property type="entry name" value="Helicase_C-like"/>
</dbReference>
<dbReference type="InterPro" id="IPR027417">
    <property type="entry name" value="P-loop_NTPase"/>
</dbReference>
<dbReference type="PANTHER" id="PTHR18934">
    <property type="entry name" value="ATP-DEPENDENT RNA HELICASE"/>
    <property type="match status" value="1"/>
</dbReference>
<dbReference type="PANTHER" id="PTHR18934:SF99">
    <property type="entry name" value="ATP-DEPENDENT RNA HELICASE DHX37-RELATED"/>
    <property type="match status" value="1"/>
</dbReference>
<dbReference type="Pfam" id="PF00270">
    <property type="entry name" value="DEAD"/>
    <property type="match status" value="1"/>
</dbReference>
<dbReference type="Pfam" id="PF23362">
    <property type="entry name" value="DHX37_C"/>
    <property type="match status" value="1"/>
</dbReference>
<dbReference type="Pfam" id="PF21010">
    <property type="entry name" value="HA2_C"/>
    <property type="match status" value="1"/>
</dbReference>
<dbReference type="Pfam" id="PF04408">
    <property type="entry name" value="HA2_N"/>
    <property type="match status" value="1"/>
</dbReference>
<dbReference type="Pfam" id="PF00271">
    <property type="entry name" value="Helicase_C"/>
    <property type="match status" value="1"/>
</dbReference>
<dbReference type="Pfam" id="PF07717">
    <property type="entry name" value="OB_NTP_bind"/>
    <property type="match status" value="1"/>
</dbReference>
<dbReference type="SMART" id="SM00487">
    <property type="entry name" value="DEXDc"/>
    <property type="match status" value="1"/>
</dbReference>
<dbReference type="SMART" id="SM00847">
    <property type="entry name" value="HA2"/>
    <property type="match status" value="1"/>
</dbReference>
<dbReference type="SMART" id="SM00490">
    <property type="entry name" value="HELICc"/>
    <property type="match status" value="1"/>
</dbReference>
<dbReference type="SUPFAM" id="SSF52540">
    <property type="entry name" value="P-loop containing nucleoside triphosphate hydrolases"/>
    <property type="match status" value="1"/>
</dbReference>
<dbReference type="PROSITE" id="PS00690">
    <property type="entry name" value="DEAH_ATP_HELICASE"/>
    <property type="match status" value="1"/>
</dbReference>
<dbReference type="PROSITE" id="PS51192">
    <property type="entry name" value="HELICASE_ATP_BIND_1"/>
    <property type="match status" value="1"/>
</dbReference>
<dbReference type="PROSITE" id="PS51194">
    <property type="entry name" value="HELICASE_CTER"/>
    <property type="match status" value="1"/>
</dbReference>
<proteinExistence type="evidence at transcript level"/>
<accession>Q9C813</accession>
<accession>Q0WU83</accession>
<accession>Q9C873</accession>
<organism>
    <name type="scientific">Arabidopsis thaliana</name>
    <name type="common">Mouse-ear cress</name>
    <dbReference type="NCBI Taxonomy" id="3702"/>
    <lineage>
        <taxon>Eukaryota</taxon>
        <taxon>Viridiplantae</taxon>
        <taxon>Streptophyta</taxon>
        <taxon>Embryophyta</taxon>
        <taxon>Tracheophyta</taxon>
        <taxon>Spermatophyta</taxon>
        <taxon>Magnoliopsida</taxon>
        <taxon>eudicotyledons</taxon>
        <taxon>Gunneridae</taxon>
        <taxon>Pentapetalae</taxon>
        <taxon>rosids</taxon>
        <taxon>malvids</taxon>
        <taxon>Brassicales</taxon>
        <taxon>Brassicaceae</taxon>
        <taxon>Camelineae</taxon>
        <taxon>Arabidopsis</taxon>
    </lineage>
</organism>
<sequence>MASVVGDDCNLDVMPPRKKKNKGSNKMQDKLNSNNNTGSKKSRKRKLNSNVNTVACKSQKRKLKKLEEDKEKEILFSKTAELLDKYKISEDVSSLLQSSKVIGRSATKLEKRRRAMQLSKAGVETEHSDESVEQNDNDDDSCMDEPTTPEHVEIETPTFVTDSEQQLVHADLMISAEESSSKLEVDDTVDMIPLTTCRDDDEDSMDGLIENEDVTVQGPRVPAFVVHVSRPAEVEETRKDLPIVMMEQEIMEAINRHPAVIISGQTGCGKTTQVPQFLYEAGFGSKQFSSRSGIIGITQPRRVAVLATAKRVAFELGVRLGKEVGFQVRYDKKIGENSSIKFMTDGILLREIQNDFLLRRYSVIILDEAHERSLNTDILIGMLTRVIKIRQEYYEEQQKSLQSGGTVTSECQITPLKLILMSATLRVEDFVSGKRLFPNIPPLIEVPTRQYPVTIHFSKKTEIVDYIGEAYKKVMSIHKKLPQGGILVFVTGQREVDYLCEKLRKSSKELVVQAAKRDAYVKKKCDDGSFGGVDMKEIAEAFDDDSNNQNSRFSSHGEDPSDIGDGNYDDDFEEEDMYESDEDRDWETVDDGFASSFVEEGKLDALRAAFNALADKNGSVSAEPAKSIAAENQEAEQVKNKFSPGKLRVLPLYAMLSPAAQLRVFEEVEKEERLVVVATNVAETSLTIPGIKYVVDTGRVKVKNYDSKTGMESYEVDWISQASASQRAGRAGRTGPGHCYRLYSSAVFSNIFEESSLPEIMKVPVDGVILLMKSMNIPKVENFPFPTPPEPSAIREAERCLKALEALDSNGGLTPLGKAMSHYPMSPRHSRMLLTVIQMLKETRNYSRANLILGYAVAAVAALSLPNPLIMEFEGEKKNESKDADKTVKQEDKQRKKDRKEKIKAARDRFSNPSSDALTVAYALHSFEVSENGMGFCEANGLHLKTMDEMSKLKDQLLRLVFNCCKPSETEDSFSWTHGTIQDVEKSWRITTSTSSKTPLLQNEEELLGEAICAGWADRVARKTRATEYQACAVQEPVFLHRWSSLINSAPELLVYSELLLTNRPYMHGATRVRPEWLVKHAKSLCVFSAPLKDPKPYYSSEEDRVLCWVVPSFGPHNWELPAHSVAITEDRDRAAAFGCALLQGEVLTCLKSFRALLAGKPETLLEREAWGLERVGSLVMVLTEKKIDTLESLRKNWEQNPNVLYSEIEVWFQKKFRHRVKDLWQTMLKEAHVRRS</sequence>
<feature type="chain" id="PRO_0000434939" description="ATP-dependent RNA helicase DEAH13">
    <location>
        <begin position="1"/>
        <end position="1237"/>
    </location>
</feature>
<feature type="domain" description="Helicase ATP-binding" evidence="1">
    <location>
        <begin position="251"/>
        <end position="443"/>
    </location>
</feature>
<feature type="domain" description="Helicase C-terminal" evidence="2">
    <location>
        <begin position="605"/>
        <end position="776"/>
    </location>
</feature>
<feature type="region of interest" description="Disordered" evidence="3">
    <location>
        <begin position="1"/>
        <end position="51"/>
    </location>
</feature>
<feature type="region of interest" description="Disordered" evidence="3">
    <location>
        <begin position="115"/>
        <end position="148"/>
    </location>
</feature>
<feature type="region of interest" description="Disordered" evidence="3">
    <location>
        <begin position="543"/>
        <end position="585"/>
    </location>
</feature>
<feature type="region of interest" description="Disordered" evidence="3">
    <location>
        <begin position="876"/>
        <end position="910"/>
    </location>
</feature>
<feature type="short sequence motif" description="DEAH box" evidence="1">
    <location>
        <begin position="367"/>
        <end position="370"/>
    </location>
</feature>
<feature type="compositionally biased region" description="Polar residues" evidence="3">
    <location>
        <begin position="24"/>
        <end position="38"/>
    </location>
</feature>
<feature type="compositionally biased region" description="Acidic residues" evidence="3">
    <location>
        <begin position="131"/>
        <end position="143"/>
    </location>
</feature>
<feature type="compositionally biased region" description="Acidic residues" evidence="3">
    <location>
        <begin position="567"/>
        <end position="585"/>
    </location>
</feature>
<feature type="binding site" evidence="1">
    <location>
        <begin position="264"/>
        <end position="271"/>
    </location>
    <ligand>
        <name>ATP</name>
        <dbReference type="ChEBI" id="CHEBI:30616"/>
    </ligand>
</feature>
<protein>
    <recommendedName>
        <fullName>ATP-dependent RNA helicase DEAH13</fullName>
        <ecNumber>3.6.4.13</ecNumber>
    </recommendedName>
    <alternativeName>
        <fullName evidence="5">Protein FASCIATED STEM 4</fullName>
        <shortName evidence="5">AtFAS4</shortName>
    </alternativeName>
</protein>
<name>DEAHD_ARATH</name>
<reference key="1">
    <citation type="journal article" date="2000" name="Nature">
        <title>Sequence and analysis of chromosome 1 of the plant Arabidopsis thaliana.</title>
        <authorList>
            <person name="Theologis A."/>
            <person name="Ecker J.R."/>
            <person name="Palm C.J."/>
            <person name="Federspiel N.A."/>
            <person name="Kaul S."/>
            <person name="White O."/>
            <person name="Alonso J."/>
            <person name="Altafi H."/>
            <person name="Araujo R."/>
            <person name="Bowman C.L."/>
            <person name="Brooks S.Y."/>
            <person name="Buehler E."/>
            <person name="Chan A."/>
            <person name="Chao Q."/>
            <person name="Chen H."/>
            <person name="Cheuk R.F."/>
            <person name="Chin C.W."/>
            <person name="Chung M.K."/>
            <person name="Conn L."/>
            <person name="Conway A.B."/>
            <person name="Conway A.R."/>
            <person name="Creasy T.H."/>
            <person name="Dewar K."/>
            <person name="Dunn P."/>
            <person name="Etgu P."/>
            <person name="Feldblyum T.V."/>
            <person name="Feng J.-D."/>
            <person name="Fong B."/>
            <person name="Fujii C.Y."/>
            <person name="Gill J.E."/>
            <person name="Goldsmith A.D."/>
            <person name="Haas B."/>
            <person name="Hansen N.F."/>
            <person name="Hughes B."/>
            <person name="Huizar L."/>
            <person name="Hunter J.L."/>
            <person name="Jenkins J."/>
            <person name="Johnson-Hopson C."/>
            <person name="Khan S."/>
            <person name="Khaykin E."/>
            <person name="Kim C.J."/>
            <person name="Koo H.L."/>
            <person name="Kremenetskaia I."/>
            <person name="Kurtz D.B."/>
            <person name="Kwan A."/>
            <person name="Lam B."/>
            <person name="Langin-Hooper S."/>
            <person name="Lee A."/>
            <person name="Lee J.M."/>
            <person name="Lenz C.A."/>
            <person name="Li J.H."/>
            <person name="Li Y.-P."/>
            <person name="Lin X."/>
            <person name="Liu S.X."/>
            <person name="Liu Z.A."/>
            <person name="Luros J.S."/>
            <person name="Maiti R."/>
            <person name="Marziali A."/>
            <person name="Militscher J."/>
            <person name="Miranda M."/>
            <person name="Nguyen M."/>
            <person name="Nierman W.C."/>
            <person name="Osborne B.I."/>
            <person name="Pai G."/>
            <person name="Peterson J."/>
            <person name="Pham P.K."/>
            <person name="Rizzo M."/>
            <person name="Rooney T."/>
            <person name="Rowley D."/>
            <person name="Sakano H."/>
            <person name="Salzberg S.L."/>
            <person name="Schwartz J.R."/>
            <person name="Shinn P."/>
            <person name="Southwick A.M."/>
            <person name="Sun H."/>
            <person name="Tallon L.J."/>
            <person name="Tambunga G."/>
            <person name="Toriumi M.J."/>
            <person name="Town C.D."/>
            <person name="Utterback T."/>
            <person name="Van Aken S."/>
            <person name="Vaysberg M."/>
            <person name="Vysotskaia V.S."/>
            <person name="Walker M."/>
            <person name="Wu D."/>
            <person name="Yu G."/>
            <person name="Fraser C.M."/>
            <person name="Venter J.C."/>
            <person name="Davis R.W."/>
        </authorList>
    </citation>
    <scope>NUCLEOTIDE SEQUENCE [LARGE SCALE GENOMIC DNA]</scope>
    <source>
        <strain>cv. Columbia</strain>
    </source>
</reference>
<reference key="2">
    <citation type="journal article" date="2017" name="Plant J.">
        <title>Araport11: a complete reannotation of the Arabidopsis thaliana reference genome.</title>
        <authorList>
            <person name="Cheng C.Y."/>
            <person name="Krishnakumar V."/>
            <person name="Chan A.P."/>
            <person name="Thibaud-Nissen F."/>
            <person name="Schobel S."/>
            <person name="Town C.D."/>
        </authorList>
    </citation>
    <scope>GENOME REANNOTATION</scope>
    <source>
        <strain>cv. Columbia</strain>
    </source>
</reference>
<reference key="3">
    <citation type="submission" date="2006-07" db="EMBL/GenBank/DDBJ databases">
        <title>Large-scale analysis of RIKEN Arabidopsis full-length (RAFL) cDNAs.</title>
        <authorList>
            <person name="Totoki Y."/>
            <person name="Seki M."/>
            <person name="Ishida J."/>
            <person name="Nakajima M."/>
            <person name="Enju A."/>
            <person name="Kamiya A."/>
            <person name="Narusaka M."/>
            <person name="Shin-i T."/>
            <person name="Nakagawa M."/>
            <person name="Sakamoto N."/>
            <person name="Oishi K."/>
            <person name="Kohara Y."/>
            <person name="Kobayashi M."/>
            <person name="Toyoda A."/>
            <person name="Sakaki Y."/>
            <person name="Sakurai T."/>
            <person name="Iida K."/>
            <person name="Akiyama K."/>
            <person name="Satou M."/>
            <person name="Toyoda T."/>
            <person name="Konagaya A."/>
            <person name="Carninci P."/>
            <person name="Kawai J."/>
            <person name="Hayashizaki Y."/>
            <person name="Shinozaki K."/>
        </authorList>
    </citation>
    <scope>NUCLEOTIDE SEQUENCE [LARGE SCALE MRNA] OF 499-895</scope>
    <source>
        <strain>cv. Columbia</strain>
    </source>
</reference>
<reference key="4">
    <citation type="journal article" date="2008" name="J. Proteomics Bioinform.">
        <title>Identification and analysis of the Arabidopsis thaliana atFAS4 gene whose overexpression results in the development of a fasciated stem.</title>
        <authorList>
            <person name="Pogorelko G."/>
            <person name="Fursova O."/>
            <person name="Klimov E."/>
        </authorList>
    </citation>
    <scope>IDENTIFICATION</scope>
</reference>
<reference key="5">
    <citation type="journal article" date="2013" name="PLoS ONE">
        <title>Genome-wide comparative in silico analysis of the RNA helicase gene family in Zea mays and Glycine max: a comparison with Arabidopsis and Oryza sativa.</title>
        <authorList>
            <person name="Xu R."/>
            <person name="Zhang S."/>
            <person name="Huang J."/>
            <person name="Zheng C."/>
        </authorList>
    </citation>
    <scope>GENE FAMILY</scope>
</reference>
<evidence type="ECO:0000255" key="1">
    <source>
        <dbReference type="PROSITE-ProRule" id="PRU00541"/>
    </source>
</evidence>
<evidence type="ECO:0000255" key="2">
    <source>
        <dbReference type="PROSITE-ProRule" id="PRU00542"/>
    </source>
</evidence>
<evidence type="ECO:0000256" key="3">
    <source>
        <dbReference type="SAM" id="MobiDB-lite"/>
    </source>
</evidence>
<evidence type="ECO:0000269" key="4">
    <source>
    </source>
</evidence>
<evidence type="ECO:0000303" key="5">
    <source>
    </source>
</evidence>
<evidence type="ECO:0000305" key="6"/>
<evidence type="ECO:0000312" key="7">
    <source>
        <dbReference type="Araport" id="AT1G33390"/>
    </source>
</evidence>
<evidence type="ECO:0000312" key="8">
    <source>
        <dbReference type="EMBL" id="AAG51220.1"/>
    </source>
</evidence>
<evidence type="ECO:0000312" key="9">
    <source>
        <dbReference type="EMBL" id="AAG51287.1"/>
    </source>
</evidence>
<keyword id="KW-0067">ATP-binding</keyword>
<keyword id="KW-0347">Helicase</keyword>
<keyword id="KW-0378">Hydrolase</keyword>
<keyword id="KW-0547">Nucleotide-binding</keyword>
<keyword id="KW-1185">Reference proteome</keyword>
<comment type="catalytic activity">
    <reaction>
        <text>ATP + H2O = ADP + phosphate + H(+)</text>
        <dbReference type="Rhea" id="RHEA:13065"/>
        <dbReference type="ChEBI" id="CHEBI:15377"/>
        <dbReference type="ChEBI" id="CHEBI:15378"/>
        <dbReference type="ChEBI" id="CHEBI:30616"/>
        <dbReference type="ChEBI" id="CHEBI:43474"/>
        <dbReference type="ChEBI" id="CHEBI:456216"/>
        <dbReference type="EC" id="3.6.4.13"/>
    </reaction>
</comment>
<comment type="miscellaneous">
    <text evidence="4">Overexpression results in the development of a fasciated stem.</text>
</comment>
<comment type="similarity">
    <text evidence="6">Belongs to the DEAD box helicase family. DEAH subfamily.</text>
</comment>
<comment type="sequence caution" evidence="6">
    <conflict type="erroneous gene model prediction">
        <sequence resource="EMBL-CDS" id="AAG51287"/>
    </conflict>
</comment>
<gene>
    <name evidence="5" type="primary">FAS4</name>
    <name evidence="7" type="ordered locus">At1g33390</name>
    <name evidence="8" type="ORF">F10C21.6</name>
    <name evidence="9" type="ORF">T16O9.12</name>
</gene>